<reference key="1">
    <citation type="journal article" date="2004" name="J. Mol. Evol.">
        <title>Comparative analysis of the complete plastid genome sequence of the red alga Gracilaria tenuistipitata var. liui provides insights into the evolution of rhodoplasts and their relationship to other plastids.</title>
        <authorList>
            <person name="Hagopian J.C."/>
            <person name="Reis M."/>
            <person name="Kitajima J.P."/>
            <person name="Bhattacharya D."/>
            <person name="de Oliveira M.C."/>
        </authorList>
    </citation>
    <scope>NUCLEOTIDE SEQUENCE [LARGE SCALE GENOMIC DNA]</scope>
</reference>
<accession>Q6B940</accession>
<evidence type="ECO:0000255" key="1">
    <source>
        <dbReference type="HAMAP-Rule" id="MF_01209"/>
    </source>
</evidence>
<geneLocation type="chloroplast"/>
<comment type="function">
    <text evidence="1">Small subunit of the glutamine-dependent carbamoyl phosphate synthetase (CPSase). CPSase catalyzes the formation of carbamoyl phosphate from the ammonia moiety of glutamine, carbonate, and phosphate donated by ATP, constituting the first step of 2 biosynthetic pathways, one leading to arginine and/or urea and the other to pyrimidine nucleotides. The small subunit (glutamine amidotransferase) binds and cleaves glutamine to supply the large subunit with the substrate ammonia.</text>
</comment>
<comment type="catalytic activity">
    <reaction evidence="1">
        <text>hydrogencarbonate + L-glutamine + 2 ATP + H2O = carbamoyl phosphate + L-glutamate + 2 ADP + phosphate + 2 H(+)</text>
        <dbReference type="Rhea" id="RHEA:18633"/>
        <dbReference type="ChEBI" id="CHEBI:15377"/>
        <dbReference type="ChEBI" id="CHEBI:15378"/>
        <dbReference type="ChEBI" id="CHEBI:17544"/>
        <dbReference type="ChEBI" id="CHEBI:29985"/>
        <dbReference type="ChEBI" id="CHEBI:30616"/>
        <dbReference type="ChEBI" id="CHEBI:43474"/>
        <dbReference type="ChEBI" id="CHEBI:58228"/>
        <dbReference type="ChEBI" id="CHEBI:58359"/>
        <dbReference type="ChEBI" id="CHEBI:456216"/>
        <dbReference type="EC" id="6.3.5.5"/>
    </reaction>
</comment>
<comment type="catalytic activity">
    <molecule>Carbamoyl phosphate synthase small chain</molecule>
    <reaction evidence="1">
        <text>L-glutamine + H2O = L-glutamate + NH4(+)</text>
        <dbReference type="Rhea" id="RHEA:15889"/>
        <dbReference type="ChEBI" id="CHEBI:15377"/>
        <dbReference type="ChEBI" id="CHEBI:28938"/>
        <dbReference type="ChEBI" id="CHEBI:29985"/>
        <dbReference type="ChEBI" id="CHEBI:58359"/>
    </reaction>
</comment>
<comment type="pathway">
    <text evidence="1">Amino-acid biosynthesis; L-arginine biosynthesis; carbamoyl phosphate from bicarbonate: step 1/1.</text>
</comment>
<comment type="pathway">
    <text evidence="1">Pyrimidine metabolism; UMP biosynthesis via de novo pathway; (S)-dihydroorotate from bicarbonate: step 1/3.</text>
</comment>
<comment type="subunit">
    <text evidence="1">Composed of two chains; the small (or glutamine) chain promotes the hydrolysis of glutamine to ammonia, which is used by the large (or ammonia) chain to synthesize carbamoyl phosphate. Tetramer of heterodimers (alpha,beta)4.</text>
</comment>
<comment type="subcellular location">
    <subcellularLocation>
        <location evidence="1">Plastid</location>
        <location evidence="1">Chloroplast</location>
    </subcellularLocation>
</comment>
<comment type="similarity">
    <text evidence="1">Belongs to the CarA family.</text>
</comment>
<proteinExistence type="inferred from homology"/>
<protein>
    <recommendedName>
        <fullName evidence="1">Carbamoyl phosphate synthase small chain</fullName>
        <ecNumber evidence="1">6.3.5.5</ecNumber>
    </recommendedName>
    <alternativeName>
        <fullName evidence="1">Carbamoyl phosphate synthetase glutamine chain</fullName>
    </alternativeName>
</protein>
<sequence length="395" mass="45003">MTYNLHPAILVLKDGKFYRGWTLINSIISFGEVVFNTGMTGYQEIMTDPSYAEQIITFTYPEIGNTGINHEDNESNKIHVKGIITKNICFSPNNWRQQESFINYIFNNQIPHIFGIDTRALTKHLRKTGSMNGCISSQYLNPYLLSTKFKDRLSIESSDLVKQVTTSKNYEFQGYSHKHFSYLQYKTDKMYGYGLKIILIDFGVKYNILSRLDNYGCSIQILPATSSYETINAYNPDGIILSNGPGDPSIITYAIKTVKKIIKYTNIPIFGICMGHQIISLALEGTTFKLKFGHRGLNHPAGMKQKAEVTSQNHGFAVNQESLYKDTINITHFNLNDTTVAGILHNKKPIFSVQYHPEASPGPHDSDYLFKYFINLIKHFKQYKNYKNSSLAQAR</sequence>
<dbReference type="EC" id="6.3.5.5" evidence="1"/>
<dbReference type="EMBL" id="AY673996">
    <property type="protein sequence ID" value="AAT79595.1"/>
    <property type="molecule type" value="Genomic_DNA"/>
</dbReference>
<dbReference type="RefSeq" id="YP_063520.1">
    <property type="nucleotide sequence ID" value="NC_006137.1"/>
</dbReference>
<dbReference type="SMR" id="Q6B940"/>
<dbReference type="GeneID" id="2944065"/>
<dbReference type="UniPathway" id="UPA00068">
    <property type="reaction ID" value="UER00171"/>
</dbReference>
<dbReference type="UniPathway" id="UPA00070">
    <property type="reaction ID" value="UER00115"/>
</dbReference>
<dbReference type="GO" id="GO:0009507">
    <property type="term" value="C:chloroplast"/>
    <property type="evidence" value="ECO:0007669"/>
    <property type="project" value="UniProtKB-SubCell"/>
</dbReference>
<dbReference type="GO" id="GO:0005524">
    <property type="term" value="F:ATP binding"/>
    <property type="evidence" value="ECO:0007669"/>
    <property type="project" value="UniProtKB-UniRule"/>
</dbReference>
<dbReference type="GO" id="GO:0004088">
    <property type="term" value="F:carbamoyl-phosphate synthase (glutamine-hydrolyzing) activity"/>
    <property type="evidence" value="ECO:0007669"/>
    <property type="project" value="UniProtKB-UniRule"/>
</dbReference>
<dbReference type="GO" id="GO:0004359">
    <property type="term" value="F:glutaminase activity"/>
    <property type="evidence" value="ECO:0007669"/>
    <property type="project" value="RHEA"/>
</dbReference>
<dbReference type="GO" id="GO:0006207">
    <property type="term" value="P:'de novo' pyrimidine nucleobase biosynthetic process"/>
    <property type="evidence" value="ECO:0007669"/>
    <property type="project" value="InterPro"/>
</dbReference>
<dbReference type="GO" id="GO:0044205">
    <property type="term" value="P:'de novo' UMP biosynthetic process"/>
    <property type="evidence" value="ECO:0007669"/>
    <property type="project" value="UniProtKB-UniRule"/>
</dbReference>
<dbReference type="GO" id="GO:0006541">
    <property type="term" value="P:glutamine metabolic process"/>
    <property type="evidence" value="ECO:0007669"/>
    <property type="project" value="InterPro"/>
</dbReference>
<dbReference type="GO" id="GO:0006526">
    <property type="term" value="P:L-arginine biosynthetic process"/>
    <property type="evidence" value="ECO:0007669"/>
    <property type="project" value="UniProtKB-UniRule"/>
</dbReference>
<dbReference type="CDD" id="cd01744">
    <property type="entry name" value="GATase1_CPSase"/>
    <property type="match status" value="1"/>
</dbReference>
<dbReference type="FunFam" id="3.50.30.20:FF:000001">
    <property type="entry name" value="Carbamoyl-phosphate synthase small chain"/>
    <property type="match status" value="1"/>
</dbReference>
<dbReference type="Gene3D" id="3.40.50.880">
    <property type="match status" value="1"/>
</dbReference>
<dbReference type="Gene3D" id="3.50.30.20">
    <property type="entry name" value="Carbamoyl-phosphate synthase small subunit, N-terminal domain"/>
    <property type="match status" value="1"/>
</dbReference>
<dbReference type="HAMAP" id="MF_01209">
    <property type="entry name" value="CPSase_S_chain"/>
    <property type="match status" value="1"/>
</dbReference>
<dbReference type="InterPro" id="IPR050472">
    <property type="entry name" value="Anth_synth/Amidotransfase"/>
</dbReference>
<dbReference type="InterPro" id="IPR006274">
    <property type="entry name" value="CarbamoylP_synth_ssu"/>
</dbReference>
<dbReference type="InterPro" id="IPR002474">
    <property type="entry name" value="CarbamoylP_synth_ssu_N"/>
</dbReference>
<dbReference type="InterPro" id="IPR036480">
    <property type="entry name" value="CarbP_synth_ssu_N_sf"/>
</dbReference>
<dbReference type="InterPro" id="IPR029062">
    <property type="entry name" value="Class_I_gatase-like"/>
</dbReference>
<dbReference type="InterPro" id="IPR035686">
    <property type="entry name" value="CPSase_GATase1"/>
</dbReference>
<dbReference type="InterPro" id="IPR017926">
    <property type="entry name" value="GATASE"/>
</dbReference>
<dbReference type="NCBIfam" id="TIGR01368">
    <property type="entry name" value="CPSaseIIsmall"/>
    <property type="match status" value="1"/>
</dbReference>
<dbReference type="NCBIfam" id="NF009475">
    <property type="entry name" value="PRK12838.1"/>
    <property type="match status" value="1"/>
</dbReference>
<dbReference type="PANTHER" id="PTHR43418:SF7">
    <property type="entry name" value="CARBAMOYL-PHOSPHATE SYNTHASE SMALL CHAIN"/>
    <property type="match status" value="1"/>
</dbReference>
<dbReference type="PANTHER" id="PTHR43418">
    <property type="entry name" value="MULTIFUNCTIONAL TRYPTOPHAN BIOSYNTHESIS PROTEIN-RELATED"/>
    <property type="match status" value="1"/>
</dbReference>
<dbReference type="Pfam" id="PF00988">
    <property type="entry name" value="CPSase_sm_chain"/>
    <property type="match status" value="1"/>
</dbReference>
<dbReference type="Pfam" id="PF00117">
    <property type="entry name" value="GATase"/>
    <property type="match status" value="1"/>
</dbReference>
<dbReference type="PRINTS" id="PR00097">
    <property type="entry name" value="ANTSNTHASEII"/>
</dbReference>
<dbReference type="PRINTS" id="PR00099">
    <property type="entry name" value="CPSGATASE"/>
</dbReference>
<dbReference type="PRINTS" id="PR00096">
    <property type="entry name" value="GATASE"/>
</dbReference>
<dbReference type="SMART" id="SM01097">
    <property type="entry name" value="CPSase_sm_chain"/>
    <property type="match status" value="1"/>
</dbReference>
<dbReference type="SUPFAM" id="SSF52021">
    <property type="entry name" value="Carbamoyl phosphate synthetase, small subunit N-terminal domain"/>
    <property type="match status" value="1"/>
</dbReference>
<dbReference type="SUPFAM" id="SSF52317">
    <property type="entry name" value="Class I glutamine amidotransferase-like"/>
    <property type="match status" value="1"/>
</dbReference>
<dbReference type="PROSITE" id="PS51273">
    <property type="entry name" value="GATASE_TYPE_1"/>
    <property type="match status" value="1"/>
</dbReference>
<feature type="chain" id="PRO_0000112370" description="Carbamoyl phosphate synthase small chain">
    <location>
        <begin position="1"/>
        <end position="395"/>
    </location>
</feature>
<feature type="domain" description="Glutamine amidotransferase type-1" evidence="1">
    <location>
        <begin position="196"/>
        <end position="383"/>
    </location>
</feature>
<feature type="region of interest" description="CPSase" evidence="1">
    <location>
        <begin position="1"/>
        <end position="192"/>
    </location>
</feature>
<feature type="active site" description="Nucleophile" evidence="1">
    <location>
        <position position="273"/>
    </location>
</feature>
<feature type="active site" evidence="1">
    <location>
        <position position="356"/>
    </location>
</feature>
<feature type="active site" evidence="1">
    <location>
        <position position="358"/>
    </location>
</feature>
<feature type="binding site" evidence="1">
    <location>
        <position position="50"/>
    </location>
    <ligand>
        <name>L-glutamine</name>
        <dbReference type="ChEBI" id="CHEBI:58359"/>
    </ligand>
</feature>
<feature type="binding site" evidence="1">
    <location>
        <position position="244"/>
    </location>
    <ligand>
        <name>L-glutamine</name>
        <dbReference type="ChEBI" id="CHEBI:58359"/>
    </ligand>
</feature>
<feature type="binding site" evidence="1">
    <location>
        <position position="246"/>
    </location>
    <ligand>
        <name>L-glutamine</name>
        <dbReference type="ChEBI" id="CHEBI:58359"/>
    </ligand>
</feature>
<feature type="binding site" evidence="1">
    <location>
        <position position="274"/>
    </location>
    <ligand>
        <name>L-glutamine</name>
        <dbReference type="ChEBI" id="CHEBI:58359"/>
    </ligand>
</feature>
<feature type="binding site" evidence="1">
    <location>
        <position position="277"/>
    </location>
    <ligand>
        <name>L-glutamine</name>
        <dbReference type="ChEBI" id="CHEBI:58359"/>
    </ligand>
</feature>
<feature type="binding site" evidence="1">
    <location>
        <position position="313"/>
    </location>
    <ligand>
        <name>L-glutamine</name>
        <dbReference type="ChEBI" id="CHEBI:58359"/>
    </ligand>
</feature>
<feature type="binding site" evidence="1">
    <location>
        <position position="315"/>
    </location>
    <ligand>
        <name>L-glutamine</name>
        <dbReference type="ChEBI" id="CHEBI:58359"/>
    </ligand>
</feature>
<feature type="binding site" evidence="1">
    <location>
        <position position="316"/>
    </location>
    <ligand>
        <name>L-glutamine</name>
        <dbReference type="ChEBI" id="CHEBI:58359"/>
    </ligand>
</feature>
<name>CARA_GRATL</name>
<organism>
    <name type="scientific">Gracilaria tenuistipitata var. liui</name>
    <name type="common">Red alga</name>
    <dbReference type="NCBI Taxonomy" id="285951"/>
    <lineage>
        <taxon>Eukaryota</taxon>
        <taxon>Rhodophyta</taxon>
        <taxon>Florideophyceae</taxon>
        <taxon>Rhodymeniophycidae</taxon>
        <taxon>Gracilariales</taxon>
        <taxon>Gracilariaceae</taxon>
        <taxon>Gracilaria</taxon>
        <taxon>Gracilaria tenuistipitata</taxon>
    </lineage>
</organism>
<gene>
    <name evidence="1" type="primary">carA</name>
    <name type="ordered locus">Grc000013</name>
</gene>
<keyword id="KW-0028">Amino-acid biosynthesis</keyword>
<keyword id="KW-0055">Arginine biosynthesis</keyword>
<keyword id="KW-0067">ATP-binding</keyword>
<keyword id="KW-0150">Chloroplast</keyword>
<keyword id="KW-0315">Glutamine amidotransferase</keyword>
<keyword id="KW-0436">Ligase</keyword>
<keyword id="KW-0547">Nucleotide-binding</keyword>
<keyword id="KW-0934">Plastid</keyword>
<keyword id="KW-0665">Pyrimidine biosynthesis</keyword>